<gene>
    <name evidence="1" type="primary">rimO</name>
    <name type="ordered locus">BT_0913</name>
</gene>
<proteinExistence type="inferred from homology"/>
<evidence type="ECO:0000255" key="1">
    <source>
        <dbReference type="HAMAP-Rule" id="MF_01865"/>
    </source>
</evidence>
<evidence type="ECO:0000255" key="2">
    <source>
        <dbReference type="PROSITE-ProRule" id="PRU01266"/>
    </source>
</evidence>
<feature type="chain" id="PRO_0000374707" description="Ribosomal protein uS12 methylthiotransferase RimO">
    <location>
        <begin position="1"/>
        <end position="436"/>
    </location>
</feature>
<feature type="domain" description="MTTase N-terminal" evidence="1">
    <location>
        <begin position="4"/>
        <end position="122"/>
    </location>
</feature>
<feature type="domain" description="Radical SAM core" evidence="2">
    <location>
        <begin position="132"/>
        <end position="363"/>
    </location>
</feature>
<feature type="domain" description="TRAM" evidence="1">
    <location>
        <begin position="366"/>
        <end position="433"/>
    </location>
</feature>
<feature type="binding site" evidence="1">
    <location>
        <position position="13"/>
    </location>
    <ligand>
        <name>[4Fe-4S] cluster</name>
        <dbReference type="ChEBI" id="CHEBI:49883"/>
        <label>1</label>
    </ligand>
</feature>
<feature type="binding site" evidence="1">
    <location>
        <position position="51"/>
    </location>
    <ligand>
        <name>[4Fe-4S] cluster</name>
        <dbReference type="ChEBI" id="CHEBI:49883"/>
        <label>1</label>
    </ligand>
</feature>
<feature type="binding site" evidence="1">
    <location>
        <position position="85"/>
    </location>
    <ligand>
        <name>[4Fe-4S] cluster</name>
        <dbReference type="ChEBI" id="CHEBI:49883"/>
        <label>1</label>
    </ligand>
</feature>
<feature type="binding site" evidence="1">
    <location>
        <position position="146"/>
    </location>
    <ligand>
        <name>[4Fe-4S] cluster</name>
        <dbReference type="ChEBI" id="CHEBI:49883"/>
        <label>2</label>
        <note>4Fe-4S-S-AdoMet</note>
    </ligand>
</feature>
<feature type="binding site" evidence="1">
    <location>
        <position position="150"/>
    </location>
    <ligand>
        <name>[4Fe-4S] cluster</name>
        <dbReference type="ChEBI" id="CHEBI:49883"/>
        <label>2</label>
        <note>4Fe-4S-S-AdoMet</note>
    </ligand>
</feature>
<feature type="binding site" evidence="1">
    <location>
        <position position="153"/>
    </location>
    <ligand>
        <name>[4Fe-4S] cluster</name>
        <dbReference type="ChEBI" id="CHEBI:49883"/>
        <label>2</label>
        <note>4Fe-4S-S-AdoMet</note>
    </ligand>
</feature>
<reference key="1">
    <citation type="journal article" date="2003" name="Science">
        <title>A genomic view of the human-Bacteroides thetaiotaomicron symbiosis.</title>
        <authorList>
            <person name="Xu J."/>
            <person name="Bjursell M.K."/>
            <person name="Himrod J."/>
            <person name="Deng S."/>
            <person name="Carmichael L.K."/>
            <person name="Chiang H.C."/>
            <person name="Hooper L.V."/>
            <person name="Gordon J.I."/>
        </authorList>
    </citation>
    <scope>NUCLEOTIDE SEQUENCE [LARGE SCALE GENOMIC DNA]</scope>
    <source>
        <strain>ATCC 29148 / DSM 2079 / JCM 5827 / CCUG 10774 / NCTC 10582 / VPI-5482 / E50</strain>
    </source>
</reference>
<accession>Q8A9A2</accession>
<organism>
    <name type="scientific">Bacteroides thetaiotaomicron (strain ATCC 29148 / DSM 2079 / JCM 5827 / CCUG 10774 / NCTC 10582 / VPI-5482 / E50)</name>
    <dbReference type="NCBI Taxonomy" id="226186"/>
    <lineage>
        <taxon>Bacteria</taxon>
        <taxon>Pseudomonadati</taxon>
        <taxon>Bacteroidota</taxon>
        <taxon>Bacteroidia</taxon>
        <taxon>Bacteroidales</taxon>
        <taxon>Bacteroidaceae</taxon>
        <taxon>Bacteroides</taxon>
    </lineage>
</organism>
<name>RIMO_BACTN</name>
<dbReference type="EC" id="2.8.4.4" evidence="1"/>
<dbReference type="EMBL" id="AE015928">
    <property type="protein sequence ID" value="AAO76020.1"/>
    <property type="molecule type" value="Genomic_DNA"/>
</dbReference>
<dbReference type="RefSeq" id="NP_809826.1">
    <property type="nucleotide sequence ID" value="NC_004663.1"/>
</dbReference>
<dbReference type="RefSeq" id="WP_008765734.1">
    <property type="nucleotide sequence ID" value="NZ_UYXG01000013.1"/>
</dbReference>
<dbReference type="SMR" id="Q8A9A2"/>
<dbReference type="FunCoup" id="Q8A9A2">
    <property type="interactions" value="329"/>
</dbReference>
<dbReference type="STRING" id="226186.BT_0913"/>
<dbReference type="PaxDb" id="226186-BT_0913"/>
<dbReference type="DNASU" id="1073427"/>
<dbReference type="EnsemblBacteria" id="AAO76020">
    <property type="protein sequence ID" value="AAO76020"/>
    <property type="gene ID" value="BT_0913"/>
</dbReference>
<dbReference type="GeneID" id="60926886"/>
<dbReference type="KEGG" id="bth:BT_0913"/>
<dbReference type="PATRIC" id="fig|226186.12.peg.925"/>
<dbReference type="eggNOG" id="COG0621">
    <property type="taxonomic scope" value="Bacteria"/>
</dbReference>
<dbReference type="HOGENOM" id="CLU_018697_0_1_10"/>
<dbReference type="InParanoid" id="Q8A9A2"/>
<dbReference type="OrthoDB" id="9805215at2"/>
<dbReference type="Proteomes" id="UP000001414">
    <property type="component" value="Chromosome"/>
</dbReference>
<dbReference type="GO" id="GO:0005829">
    <property type="term" value="C:cytosol"/>
    <property type="evidence" value="ECO:0000318"/>
    <property type="project" value="GO_Central"/>
</dbReference>
<dbReference type="GO" id="GO:0051539">
    <property type="term" value="F:4 iron, 4 sulfur cluster binding"/>
    <property type="evidence" value="ECO:0000318"/>
    <property type="project" value="GO_Central"/>
</dbReference>
<dbReference type="GO" id="GO:0035599">
    <property type="term" value="F:aspartic acid methylthiotransferase activity"/>
    <property type="evidence" value="ECO:0000318"/>
    <property type="project" value="GO_Central"/>
</dbReference>
<dbReference type="GO" id="GO:0046872">
    <property type="term" value="F:metal ion binding"/>
    <property type="evidence" value="ECO:0007669"/>
    <property type="project" value="UniProtKB-KW"/>
</dbReference>
<dbReference type="GO" id="GO:0103039">
    <property type="term" value="F:protein methylthiotransferase activity"/>
    <property type="evidence" value="ECO:0007669"/>
    <property type="project" value="UniProtKB-EC"/>
</dbReference>
<dbReference type="GO" id="GO:0006400">
    <property type="term" value="P:tRNA modification"/>
    <property type="evidence" value="ECO:0007669"/>
    <property type="project" value="InterPro"/>
</dbReference>
<dbReference type="CDD" id="cd01335">
    <property type="entry name" value="Radical_SAM"/>
    <property type="match status" value="1"/>
</dbReference>
<dbReference type="FunFam" id="2.40.50.140:FF:000210">
    <property type="entry name" value="Ribosomal protein S12 methylthiotransferase RimO"/>
    <property type="match status" value="1"/>
</dbReference>
<dbReference type="FunFam" id="3.40.50.12160:FF:000014">
    <property type="entry name" value="Ribosomal protein S12 methylthiotransferase RimO"/>
    <property type="match status" value="1"/>
</dbReference>
<dbReference type="FunFam" id="3.80.30.20:FF:000001">
    <property type="entry name" value="tRNA-2-methylthio-N(6)-dimethylallyladenosine synthase 2"/>
    <property type="match status" value="1"/>
</dbReference>
<dbReference type="Gene3D" id="3.40.50.12160">
    <property type="entry name" value="Methylthiotransferase, N-terminal domain"/>
    <property type="match status" value="1"/>
</dbReference>
<dbReference type="Gene3D" id="2.40.50.140">
    <property type="entry name" value="Nucleic acid-binding proteins"/>
    <property type="match status" value="1"/>
</dbReference>
<dbReference type="Gene3D" id="3.80.30.20">
    <property type="entry name" value="tm_1862 like domain"/>
    <property type="match status" value="1"/>
</dbReference>
<dbReference type="HAMAP" id="MF_01865">
    <property type="entry name" value="MTTase_RimO"/>
    <property type="match status" value="1"/>
</dbReference>
<dbReference type="InterPro" id="IPR006638">
    <property type="entry name" value="Elp3/MiaA/NifB-like_rSAM"/>
</dbReference>
<dbReference type="InterPro" id="IPR005839">
    <property type="entry name" value="Methylthiotransferase"/>
</dbReference>
<dbReference type="InterPro" id="IPR020612">
    <property type="entry name" value="Methylthiotransferase_CS"/>
</dbReference>
<dbReference type="InterPro" id="IPR013848">
    <property type="entry name" value="Methylthiotransferase_N"/>
</dbReference>
<dbReference type="InterPro" id="IPR038135">
    <property type="entry name" value="Methylthiotransferase_N_sf"/>
</dbReference>
<dbReference type="InterPro" id="IPR012340">
    <property type="entry name" value="NA-bd_OB-fold"/>
</dbReference>
<dbReference type="InterPro" id="IPR005840">
    <property type="entry name" value="Ribosomal_uS12_MeSTrfase_RimO"/>
</dbReference>
<dbReference type="InterPro" id="IPR007197">
    <property type="entry name" value="rSAM"/>
</dbReference>
<dbReference type="InterPro" id="IPR023404">
    <property type="entry name" value="rSAM_horseshoe"/>
</dbReference>
<dbReference type="InterPro" id="IPR002792">
    <property type="entry name" value="TRAM_dom"/>
</dbReference>
<dbReference type="NCBIfam" id="TIGR01125">
    <property type="entry name" value="30S ribosomal protein S12 methylthiotransferase RimO"/>
    <property type="match status" value="1"/>
</dbReference>
<dbReference type="NCBIfam" id="TIGR00089">
    <property type="entry name" value="MiaB/RimO family radical SAM methylthiotransferase"/>
    <property type="match status" value="1"/>
</dbReference>
<dbReference type="PANTHER" id="PTHR43837">
    <property type="entry name" value="RIBOSOMAL PROTEIN S12 METHYLTHIOTRANSFERASE RIMO"/>
    <property type="match status" value="1"/>
</dbReference>
<dbReference type="PANTHER" id="PTHR43837:SF1">
    <property type="entry name" value="RIBOSOMAL PROTEIN US12 METHYLTHIOTRANSFERASE RIMO"/>
    <property type="match status" value="1"/>
</dbReference>
<dbReference type="Pfam" id="PF04055">
    <property type="entry name" value="Radical_SAM"/>
    <property type="match status" value="1"/>
</dbReference>
<dbReference type="Pfam" id="PF18693">
    <property type="entry name" value="TRAM_2"/>
    <property type="match status" value="1"/>
</dbReference>
<dbReference type="Pfam" id="PF00919">
    <property type="entry name" value="UPF0004"/>
    <property type="match status" value="1"/>
</dbReference>
<dbReference type="SFLD" id="SFLDG01082">
    <property type="entry name" value="B12-binding_domain_containing"/>
    <property type="match status" value="1"/>
</dbReference>
<dbReference type="SFLD" id="SFLDS00029">
    <property type="entry name" value="Radical_SAM"/>
    <property type="match status" value="1"/>
</dbReference>
<dbReference type="SFLD" id="SFLDF00274">
    <property type="entry name" value="ribosomal_protein_S12_methylth"/>
    <property type="match status" value="1"/>
</dbReference>
<dbReference type="SMART" id="SM00729">
    <property type="entry name" value="Elp3"/>
    <property type="match status" value="1"/>
</dbReference>
<dbReference type="SUPFAM" id="SSF102114">
    <property type="entry name" value="Radical SAM enzymes"/>
    <property type="match status" value="1"/>
</dbReference>
<dbReference type="PROSITE" id="PS51449">
    <property type="entry name" value="MTTASE_N"/>
    <property type="match status" value="1"/>
</dbReference>
<dbReference type="PROSITE" id="PS01278">
    <property type="entry name" value="MTTASE_RADICAL"/>
    <property type="match status" value="1"/>
</dbReference>
<dbReference type="PROSITE" id="PS51918">
    <property type="entry name" value="RADICAL_SAM"/>
    <property type="match status" value="1"/>
</dbReference>
<dbReference type="PROSITE" id="PS50926">
    <property type="entry name" value="TRAM"/>
    <property type="match status" value="1"/>
</dbReference>
<keyword id="KW-0004">4Fe-4S</keyword>
<keyword id="KW-0963">Cytoplasm</keyword>
<keyword id="KW-0408">Iron</keyword>
<keyword id="KW-0411">Iron-sulfur</keyword>
<keyword id="KW-0479">Metal-binding</keyword>
<keyword id="KW-1185">Reference proteome</keyword>
<keyword id="KW-0949">S-adenosyl-L-methionine</keyword>
<keyword id="KW-0808">Transferase</keyword>
<sequence length="436" mass="50869">MKRKRIDIITLGCSKNLVDSEQLMRQLEEAGYSVTHDTENPEGEIAVINTCGFIGDAKEESINMILEFAERKEEGDLKKLFVMGCLSERYLQELAIEIPQVDKFYGKFNWKELLQDLGKTYHEELYIERTLTTPKHYAYLKISEGCDRKCSYCAIPIITGRHISKSMEEILDEVRYLVSQGVKEFQVIAQELTYYGVDLYKKQMLPELIERISEIPGVEWIRLHYAYPAHFPTDLFRVMRERDNVCKYMDIALQHISDNMLKLMRRQVSKEDTYKLIEQFRKEVPGIHLRTTLMVGHPGETEEDFEELKEFVRKARFDRMGAFAYSEEEGTYAAQQYEDSIPQEVKQARLDELMDIQQGISAELSAAKIGQQMKVIIDRIEGDYYIGRTEFDSPEVDPEVLISVSREELEVGQFYQVEVTDADDFDLYAKILNKYE</sequence>
<comment type="function">
    <text evidence="1">Catalyzes the methylthiolation of an aspartic acid residue of ribosomal protein uS12.</text>
</comment>
<comment type="catalytic activity">
    <reaction evidence="1">
        <text>L-aspartate(89)-[ribosomal protein uS12]-hydrogen + (sulfur carrier)-SH + AH2 + 2 S-adenosyl-L-methionine = 3-methylsulfanyl-L-aspartate(89)-[ribosomal protein uS12]-hydrogen + (sulfur carrier)-H + 5'-deoxyadenosine + L-methionine + A + S-adenosyl-L-homocysteine + 2 H(+)</text>
        <dbReference type="Rhea" id="RHEA:37087"/>
        <dbReference type="Rhea" id="RHEA-COMP:10460"/>
        <dbReference type="Rhea" id="RHEA-COMP:10461"/>
        <dbReference type="Rhea" id="RHEA-COMP:14737"/>
        <dbReference type="Rhea" id="RHEA-COMP:14739"/>
        <dbReference type="ChEBI" id="CHEBI:13193"/>
        <dbReference type="ChEBI" id="CHEBI:15378"/>
        <dbReference type="ChEBI" id="CHEBI:17319"/>
        <dbReference type="ChEBI" id="CHEBI:17499"/>
        <dbReference type="ChEBI" id="CHEBI:29917"/>
        <dbReference type="ChEBI" id="CHEBI:29961"/>
        <dbReference type="ChEBI" id="CHEBI:57844"/>
        <dbReference type="ChEBI" id="CHEBI:57856"/>
        <dbReference type="ChEBI" id="CHEBI:59789"/>
        <dbReference type="ChEBI" id="CHEBI:64428"/>
        <dbReference type="ChEBI" id="CHEBI:73599"/>
        <dbReference type="EC" id="2.8.4.4"/>
    </reaction>
</comment>
<comment type="cofactor">
    <cofactor evidence="1">
        <name>[4Fe-4S] cluster</name>
        <dbReference type="ChEBI" id="CHEBI:49883"/>
    </cofactor>
    <text evidence="1">Binds 2 [4Fe-4S] clusters. One cluster is coordinated with 3 cysteines and an exchangeable S-adenosyl-L-methionine.</text>
</comment>
<comment type="subcellular location">
    <subcellularLocation>
        <location evidence="1">Cytoplasm</location>
    </subcellularLocation>
</comment>
<comment type="similarity">
    <text evidence="1">Belongs to the methylthiotransferase family. RimO subfamily.</text>
</comment>
<protein>
    <recommendedName>
        <fullName evidence="1">Ribosomal protein uS12 methylthiotransferase RimO</fullName>
        <shortName evidence="1">uS12 MTTase</shortName>
        <shortName evidence="1">uS12 methylthiotransferase</shortName>
        <ecNumber evidence="1">2.8.4.4</ecNumber>
    </recommendedName>
    <alternativeName>
        <fullName evidence="1">Ribosomal protein uS12 (aspartate-C(3))-methylthiotransferase</fullName>
    </alternativeName>
    <alternativeName>
        <fullName evidence="1">Ribosome maturation factor RimO</fullName>
    </alternativeName>
</protein>